<keyword id="KW-0479">Metal-binding</keyword>
<keyword id="KW-0687">Ribonucleoprotein</keyword>
<keyword id="KW-0689">Ribosomal protein</keyword>
<keyword id="KW-0694">RNA-binding</keyword>
<keyword id="KW-0699">rRNA-binding</keyword>
<keyword id="KW-0862">Zinc</keyword>
<reference key="1">
    <citation type="submission" date="2007-11" db="EMBL/GenBank/DDBJ databases">
        <title>Genome sequencing of phylogenetically and phenotypically diverse Coxiella burnetii isolates.</title>
        <authorList>
            <person name="Seshadri R."/>
            <person name="Samuel J.E."/>
        </authorList>
    </citation>
    <scope>NUCLEOTIDE SEQUENCE [LARGE SCALE GENOMIC DNA]</scope>
    <source>
        <strain>RSA 331 / Henzerling II</strain>
    </source>
</reference>
<evidence type="ECO:0000255" key="1">
    <source>
        <dbReference type="HAMAP-Rule" id="MF_00501"/>
    </source>
</evidence>
<evidence type="ECO:0000305" key="2"/>
<gene>
    <name evidence="1" type="primary">rpmE</name>
    <name type="ordered locus">COXBURSA331_A1042</name>
</gene>
<accession>A9ND11</accession>
<protein>
    <recommendedName>
        <fullName evidence="1">Large ribosomal subunit protein bL31</fullName>
    </recommendedName>
    <alternativeName>
        <fullName evidence="2">50S ribosomal protein L31</fullName>
    </alternativeName>
</protein>
<comment type="function">
    <text evidence="1">Binds the 23S rRNA.</text>
</comment>
<comment type="cofactor">
    <cofactor evidence="1">
        <name>Zn(2+)</name>
        <dbReference type="ChEBI" id="CHEBI:29105"/>
    </cofactor>
    <text evidence="1">Binds 1 zinc ion per subunit.</text>
</comment>
<comment type="subunit">
    <text evidence="1">Part of the 50S ribosomal subunit.</text>
</comment>
<comment type="similarity">
    <text evidence="1">Belongs to the bacterial ribosomal protein bL31 family. Type A subfamily.</text>
</comment>
<sequence>MKENIHPPYKQIKVTCSCGNTFMTGSTLDRELHLEICSACHPFYTGQQKMVDTAGRVERFRKKYAKRRAANASPEDEKK</sequence>
<organism>
    <name type="scientific">Coxiella burnetii (strain RSA 331 / Henzerling II)</name>
    <dbReference type="NCBI Taxonomy" id="360115"/>
    <lineage>
        <taxon>Bacteria</taxon>
        <taxon>Pseudomonadati</taxon>
        <taxon>Pseudomonadota</taxon>
        <taxon>Gammaproteobacteria</taxon>
        <taxon>Legionellales</taxon>
        <taxon>Coxiellaceae</taxon>
        <taxon>Coxiella</taxon>
    </lineage>
</organism>
<feature type="chain" id="PRO_1000126600" description="Large ribosomal subunit protein bL31">
    <location>
        <begin position="1"/>
        <end position="79"/>
    </location>
</feature>
<feature type="binding site" evidence="1">
    <location>
        <position position="16"/>
    </location>
    <ligand>
        <name>Zn(2+)</name>
        <dbReference type="ChEBI" id="CHEBI:29105"/>
    </ligand>
</feature>
<feature type="binding site" evidence="1">
    <location>
        <position position="18"/>
    </location>
    <ligand>
        <name>Zn(2+)</name>
        <dbReference type="ChEBI" id="CHEBI:29105"/>
    </ligand>
</feature>
<feature type="binding site" evidence="1">
    <location>
        <position position="37"/>
    </location>
    <ligand>
        <name>Zn(2+)</name>
        <dbReference type="ChEBI" id="CHEBI:29105"/>
    </ligand>
</feature>
<feature type="binding site" evidence="1">
    <location>
        <position position="40"/>
    </location>
    <ligand>
        <name>Zn(2+)</name>
        <dbReference type="ChEBI" id="CHEBI:29105"/>
    </ligand>
</feature>
<proteinExistence type="inferred from homology"/>
<name>RL31_COXBR</name>
<dbReference type="EMBL" id="CP000890">
    <property type="protein sequence ID" value="ABX78379.1"/>
    <property type="molecule type" value="Genomic_DNA"/>
</dbReference>
<dbReference type="RefSeq" id="WP_005768737.1">
    <property type="nucleotide sequence ID" value="NC_010117.1"/>
</dbReference>
<dbReference type="SMR" id="A9ND11"/>
<dbReference type="KEGG" id="cbs:COXBURSA331_A1042"/>
<dbReference type="HOGENOM" id="CLU_114306_4_0_6"/>
<dbReference type="GO" id="GO:1990904">
    <property type="term" value="C:ribonucleoprotein complex"/>
    <property type="evidence" value="ECO:0007669"/>
    <property type="project" value="UniProtKB-KW"/>
</dbReference>
<dbReference type="GO" id="GO:0005840">
    <property type="term" value="C:ribosome"/>
    <property type="evidence" value="ECO:0007669"/>
    <property type="project" value="UniProtKB-KW"/>
</dbReference>
<dbReference type="GO" id="GO:0046872">
    <property type="term" value="F:metal ion binding"/>
    <property type="evidence" value="ECO:0007669"/>
    <property type="project" value="UniProtKB-KW"/>
</dbReference>
<dbReference type="GO" id="GO:0019843">
    <property type="term" value="F:rRNA binding"/>
    <property type="evidence" value="ECO:0007669"/>
    <property type="project" value="UniProtKB-KW"/>
</dbReference>
<dbReference type="GO" id="GO:0003735">
    <property type="term" value="F:structural constituent of ribosome"/>
    <property type="evidence" value="ECO:0007669"/>
    <property type="project" value="InterPro"/>
</dbReference>
<dbReference type="GO" id="GO:0006412">
    <property type="term" value="P:translation"/>
    <property type="evidence" value="ECO:0007669"/>
    <property type="project" value="UniProtKB-UniRule"/>
</dbReference>
<dbReference type="Gene3D" id="4.10.830.30">
    <property type="entry name" value="Ribosomal protein L31"/>
    <property type="match status" value="1"/>
</dbReference>
<dbReference type="HAMAP" id="MF_00501">
    <property type="entry name" value="Ribosomal_bL31_1"/>
    <property type="match status" value="1"/>
</dbReference>
<dbReference type="InterPro" id="IPR034704">
    <property type="entry name" value="Ribosomal_bL28/bL31-like_sf"/>
</dbReference>
<dbReference type="InterPro" id="IPR002150">
    <property type="entry name" value="Ribosomal_bL31"/>
</dbReference>
<dbReference type="InterPro" id="IPR027491">
    <property type="entry name" value="Ribosomal_bL31_A"/>
</dbReference>
<dbReference type="InterPro" id="IPR042105">
    <property type="entry name" value="Ribosomal_bL31_sf"/>
</dbReference>
<dbReference type="NCBIfam" id="TIGR00105">
    <property type="entry name" value="L31"/>
    <property type="match status" value="1"/>
</dbReference>
<dbReference type="NCBIfam" id="NF000612">
    <property type="entry name" value="PRK00019.1"/>
    <property type="match status" value="1"/>
</dbReference>
<dbReference type="NCBIfam" id="NF001809">
    <property type="entry name" value="PRK00528.1"/>
    <property type="match status" value="1"/>
</dbReference>
<dbReference type="PANTHER" id="PTHR33280">
    <property type="entry name" value="50S RIBOSOMAL PROTEIN L31, CHLOROPLASTIC"/>
    <property type="match status" value="1"/>
</dbReference>
<dbReference type="PANTHER" id="PTHR33280:SF6">
    <property type="entry name" value="LARGE RIBOSOMAL SUBUNIT PROTEIN BL31A"/>
    <property type="match status" value="1"/>
</dbReference>
<dbReference type="Pfam" id="PF01197">
    <property type="entry name" value="Ribosomal_L31"/>
    <property type="match status" value="1"/>
</dbReference>
<dbReference type="PRINTS" id="PR01249">
    <property type="entry name" value="RIBOSOMALL31"/>
</dbReference>
<dbReference type="SUPFAM" id="SSF143800">
    <property type="entry name" value="L28p-like"/>
    <property type="match status" value="1"/>
</dbReference>
<dbReference type="PROSITE" id="PS01143">
    <property type="entry name" value="RIBOSOMAL_L31"/>
    <property type="match status" value="1"/>
</dbReference>